<organism>
    <name type="scientific">Methanococcus maripaludis (strain C6 / ATCC BAA-1332)</name>
    <dbReference type="NCBI Taxonomy" id="444158"/>
    <lineage>
        <taxon>Archaea</taxon>
        <taxon>Methanobacteriati</taxon>
        <taxon>Methanobacteriota</taxon>
        <taxon>Methanomada group</taxon>
        <taxon>Methanococci</taxon>
        <taxon>Methanococcales</taxon>
        <taxon>Methanococcaceae</taxon>
        <taxon>Methanococcus</taxon>
    </lineage>
</organism>
<reference key="1">
    <citation type="submission" date="2007-10" db="EMBL/GenBank/DDBJ databases">
        <title>Complete sequence of Methanococcus maripaludis C6.</title>
        <authorList>
            <consortium name="US DOE Joint Genome Institute"/>
            <person name="Copeland A."/>
            <person name="Lucas S."/>
            <person name="Lapidus A."/>
            <person name="Barry K."/>
            <person name="Glavina del Rio T."/>
            <person name="Dalin E."/>
            <person name="Tice H."/>
            <person name="Pitluck S."/>
            <person name="Clum A."/>
            <person name="Schmutz J."/>
            <person name="Larimer F."/>
            <person name="Land M."/>
            <person name="Hauser L."/>
            <person name="Kyrpides N."/>
            <person name="Mikhailova N."/>
            <person name="Sieprawska-Lupa M."/>
            <person name="Whitman W.B."/>
            <person name="Richardson P."/>
        </authorList>
    </citation>
    <scope>NUCLEOTIDE SEQUENCE [LARGE SCALE GENOMIC DNA]</scope>
    <source>
        <strain>C6 / ATCC BAA-1332</strain>
    </source>
</reference>
<protein>
    <recommendedName>
        <fullName evidence="1">Ketol-acid reductoisomerase (NADP(+))</fullName>
        <shortName evidence="1">KARI</shortName>
        <ecNumber evidence="1">1.1.1.86</ecNumber>
    </recommendedName>
    <alternativeName>
        <fullName evidence="1">Acetohydroxy-acid isomeroreductase</fullName>
        <shortName evidence="1">AHIR</shortName>
    </alternativeName>
    <alternativeName>
        <fullName evidence="1">Alpha-keto-beta-hydroxylacyl reductoisomerase</fullName>
    </alternativeName>
    <alternativeName>
        <fullName evidence="1">Ketol-acid reductoisomerase type 1</fullName>
    </alternativeName>
    <alternativeName>
        <fullName evidence="1">Ketol-acid reductoisomerase type I</fullName>
    </alternativeName>
</protein>
<keyword id="KW-0028">Amino-acid biosynthesis</keyword>
<keyword id="KW-0100">Branched-chain amino acid biosynthesis</keyword>
<keyword id="KW-0460">Magnesium</keyword>
<keyword id="KW-0479">Metal-binding</keyword>
<keyword id="KW-0521">NADP</keyword>
<keyword id="KW-0560">Oxidoreductase</keyword>
<comment type="function">
    <text evidence="1">Involved in the biosynthesis of branched-chain amino acids (BCAA). Catalyzes an alkyl-migration followed by a ketol-acid reduction of (S)-2-acetolactate (S2AL) to yield (R)-2,3-dihydroxy-isovalerate. In the isomerase reaction, S2AL is rearranged via a Mg-dependent methyl migration to produce 3-hydroxy-3-methyl-2-ketobutyrate (HMKB). In the reductase reaction, this 2-ketoacid undergoes a metal-dependent reduction by NADPH to yield (R)-2,3-dihydroxy-isovalerate.</text>
</comment>
<comment type="catalytic activity">
    <reaction evidence="1">
        <text>(2R)-2,3-dihydroxy-3-methylbutanoate + NADP(+) = (2S)-2-acetolactate + NADPH + H(+)</text>
        <dbReference type="Rhea" id="RHEA:22068"/>
        <dbReference type="ChEBI" id="CHEBI:15378"/>
        <dbReference type="ChEBI" id="CHEBI:49072"/>
        <dbReference type="ChEBI" id="CHEBI:57783"/>
        <dbReference type="ChEBI" id="CHEBI:58349"/>
        <dbReference type="ChEBI" id="CHEBI:58476"/>
        <dbReference type="EC" id="1.1.1.86"/>
    </reaction>
</comment>
<comment type="catalytic activity">
    <reaction evidence="1">
        <text>(2R,3R)-2,3-dihydroxy-3-methylpentanoate + NADP(+) = (S)-2-ethyl-2-hydroxy-3-oxobutanoate + NADPH + H(+)</text>
        <dbReference type="Rhea" id="RHEA:13493"/>
        <dbReference type="ChEBI" id="CHEBI:15378"/>
        <dbReference type="ChEBI" id="CHEBI:49256"/>
        <dbReference type="ChEBI" id="CHEBI:49258"/>
        <dbReference type="ChEBI" id="CHEBI:57783"/>
        <dbReference type="ChEBI" id="CHEBI:58349"/>
        <dbReference type="EC" id="1.1.1.86"/>
    </reaction>
</comment>
<comment type="cofactor">
    <cofactor evidence="1">
        <name>Mg(2+)</name>
        <dbReference type="ChEBI" id="CHEBI:18420"/>
    </cofactor>
    <text evidence="1">Binds 2 magnesium ions per subunit.</text>
</comment>
<comment type="pathway">
    <text evidence="1">Amino-acid biosynthesis; L-isoleucine biosynthesis; L-isoleucine from 2-oxobutanoate: step 2/4.</text>
</comment>
<comment type="pathway">
    <text evidence="1">Amino-acid biosynthesis; L-valine biosynthesis; L-valine from pyruvate: step 2/4.</text>
</comment>
<comment type="similarity">
    <text evidence="1">Belongs to the ketol-acid reductoisomerase family.</text>
</comment>
<proteinExistence type="inferred from homology"/>
<dbReference type="EC" id="1.1.1.86" evidence="1"/>
<dbReference type="EMBL" id="CP000867">
    <property type="protein sequence ID" value="ABX01054.1"/>
    <property type="molecule type" value="Genomic_DNA"/>
</dbReference>
<dbReference type="SMR" id="A9A7D0"/>
<dbReference type="STRING" id="444158.MmarC6_0233"/>
<dbReference type="KEGG" id="mmx:MmarC6_0233"/>
<dbReference type="eggNOG" id="arCOG04465">
    <property type="taxonomic scope" value="Archaea"/>
</dbReference>
<dbReference type="HOGENOM" id="CLU_033821_0_1_2"/>
<dbReference type="OrthoDB" id="6064at2157"/>
<dbReference type="PhylomeDB" id="A9A7D0"/>
<dbReference type="UniPathway" id="UPA00047">
    <property type="reaction ID" value="UER00056"/>
</dbReference>
<dbReference type="UniPathway" id="UPA00049">
    <property type="reaction ID" value="UER00060"/>
</dbReference>
<dbReference type="GO" id="GO:0004455">
    <property type="term" value="F:ketol-acid reductoisomerase activity"/>
    <property type="evidence" value="ECO:0007669"/>
    <property type="project" value="UniProtKB-UniRule"/>
</dbReference>
<dbReference type="GO" id="GO:0000287">
    <property type="term" value="F:magnesium ion binding"/>
    <property type="evidence" value="ECO:0007669"/>
    <property type="project" value="UniProtKB-UniRule"/>
</dbReference>
<dbReference type="GO" id="GO:0050661">
    <property type="term" value="F:NADP binding"/>
    <property type="evidence" value="ECO:0007669"/>
    <property type="project" value="InterPro"/>
</dbReference>
<dbReference type="GO" id="GO:0009097">
    <property type="term" value="P:isoleucine biosynthetic process"/>
    <property type="evidence" value="ECO:0007669"/>
    <property type="project" value="UniProtKB-UniRule"/>
</dbReference>
<dbReference type="GO" id="GO:0009099">
    <property type="term" value="P:L-valine biosynthetic process"/>
    <property type="evidence" value="ECO:0007669"/>
    <property type="project" value="UniProtKB-UniRule"/>
</dbReference>
<dbReference type="FunFam" id="3.40.50.720:FF:000023">
    <property type="entry name" value="Ketol-acid reductoisomerase (NADP(+))"/>
    <property type="match status" value="1"/>
</dbReference>
<dbReference type="Gene3D" id="6.10.240.10">
    <property type="match status" value="1"/>
</dbReference>
<dbReference type="Gene3D" id="3.40.50.720">
    <property type="entry name" value="NAD(P)-binding Rossmann-like Domain"/>
    <property type="match status" value="1"/>
</dbReference>
<dbReference type="HAMAP" id="MF_00435">
    <property type="entry name" value="IlvC"/>
    <property type="match status" value="1"/>
</dbReference>
<dbReference type="InterPro" id="IPR008927">
    <property type="entry name" value="6-PGluconate_DH-like_C_sf"/>
</dbReference>
<dbReference type="InterPro" id="IPR013023">
    <property type="entry name" value="KARI"/>
</dbReference>
<dbReference type="InterPro" id="IPR000506">
    <property type="entry name" value="KARI_C"/>
</dbReference>
<dbReference type="InterPro" id="IPR013116">
    <property type="entry name" value="KARI_N"/>
</dbReference>
<dbReference type="InterPro" id="IPR014359">
    <property type="entry name" value="KARI_prok"/>
</dbReference>
<dbReference type="InterPro" id="IPR036291">
    <property type="entry name" value="NAD(P)-bd_dom_sf"/>
</dbReference>
<dbReference type="NCBIfam" id="TIGR00465">
    <property type="entry name" value="ilvC"/>
    <property type="match status" value="1"/>
</dbReference>
<dbReference type="NCBIfam" id="NF004017">
    <property type="entry name" value="PRK05479.1"/>
    <property type="match status" value="1"/>
</dbReference>
<dbReference type="NCBIfam" id="NF009940">
    <property type="entry name" value="PRK13403.1"/>
    <property type="match status" value="1"/>
</dbReference>
<dbReference type="PANTHER" id="PTHR21371">
    <property type="entry name" value="KETOL-ACID REDUCTOISOMERASE, MITOCHONDRIAL"/>
    <property type="match status" value="1"/>
</dbReference>
<dbReference type="PANTHER" id="PTHR21371:SF1">
    <property type="entry name" value="KETOL-ACID REDUCTOISOMERASE, MITOCHONDRIAL"/>
    <property type="match status" value="1"/>
</dbReference>
<dbReference type="Pfam" id="PF01450">
    <property type="entry name" value="KARI_C"/>
    <property type="match status" value="1"/>
</dbReference>
<dbReference type="Pfam" id="PF07991">
    <property type="entry name" value="KARI_N"/>
    <property type="match status" value="1"/>
</dbReference>
<dbReference type="PIRSF" id="PIRSF000116">
    <property type="entry name" value="IlvC_gammaproteo"/>
    <property type="match status" value="1"/>
</dbReference>
<dbReference type="SUPFAM" id="SSF48179">
    <property type="entry name" value="6-phosphogluconate dehydrogenase C-terminal domain-like"/>
    <property type="match status" value="1"/>
</dbReference>
<dbReference type="SUPFAM" id="SSF51735">
    <property type="entry name" value="NAD(P)-binding Rossmann-fold domains"/>
    <property type="match status" value="1"/>
</dbReference>
<dbReference type="PROSITE" id="PS51851">
    <property type="entry name" value="KARI_C"/>
    <property type="match status" value="1"/>
</dbReference>
<dbReference type="PROSITE" id="PS51850">
    <property type="entry name" value="KARI_N"/>
    <property type="match status" value="1"/>
</dbReference>
<name>ILVC_METM6</name>
<sequence length="330" mass="36486">MKVFYDSDFKLDALKEKTIAVIGYGSQGRAQSLNMKDSGLNVVVGLRKNGASWENAKADGHNVMTIEEAAEKADIIHILIPDELQAEVYDAQIKPCLKEGKTLSFSHGFNIHYGFIVPPKGVNVVLVAPKSPGKMVRRTYEEGFGVPGLICIEIDATNNAFDIVSAMAKGIGLSRAGVIQTTFKEETETDLFGEQAVLCGGVTELIKAGFETLVEAGYAPEMAYFETCHELKLIVDLIYQKGFKNMWNDVSNTAEYGGLTRRSRIVTADSKAAMKEILKEIQDGRFTKEFVLEKQVNHAHLKAMRRIEGELQIEEVGAKLRKMCGLEKEE</sequence>
<evidence type="ECO:0000255" key="1">
    <source>
        <dbReference type="HAMAP-Rule" id="MF_00435"/>
    </source>
</evidence>
<evidence type="ECO:0000255" key="2">
    <source>
        <dbReference type="PROSITE-ProRule" id="PRU01197"/>
    </source>
</evidence>
<evidence type="ECO:0000255" key="3">
    <source>
        <dbReference type="PROSITE-ProRule" id="PRU01198"/>
    </source>
</evidence>
<accession>A9A7D0</accession>
<feature type="chain" id="PRO_1000124308" description="Ketol-acid reductoisomerase (NADP(+))">
    <location>
        <begin position="1"/>
        <end position="330"/>
    </location>
</feature>
<feature type="domain" description="KARI N-terminal Rossmann" evidence="2">
    <location>
        <begin position="1"/>
        <end position="181"/>
    </location>
</feature>
<feature type="domain" description="KARI C-terminal knotted" evidence="3">
    <location>
        <begin position="182"/>
        <end position="327"/>
    </location>
</feature>
<feature type="active site" evidence="1">
    <location>
        <position position="107"/>
    </location>
</feature>
<feature type="binding site" evidence="1">
    <location>
        <begin position="24"/>
        <end position="27"/>
    </location>
    <ligand>
        <name>NADP(+)</name>
        <dbReference type="ChEBI" id="CHEBI:58349"/>
    </ligand>
</feature>
<feature type="binding site" evidence="1">
    <location>
        <position position="47"/>
    </location>
    <ligand>
        <name>NADP(+)</name>
        <dbReference type="ChEBI" id="CHEBI:58349"/>
    </ligand>
</feature>
<feature type="binding site" evidence="1">
    <location>
        <position position="52"/>
    </location>
    <ligand>
        <name>NADP(+)</name>
        <dbReference type="ChEBI" id="CHEBI:58349"/>
    </ligand>
</feature>
<feature type="binding site" evidence="1">
    <location>
        <begin position="82"/>
        <end position="85"/>
    </location>
    <ligand>
        <name>NADP(+)</name>
        <dbReference type="ChEBI" id="CHEBI:58349"/>
    </ligand>
</feature>
<feature type="binding site" evidence="1">
    <location>
        <position position="133"/>
    </location>
    <ligand>
        <name>NADP(+)</name>
        <dbReference type="ChEBI" id="CHEBI:58349"/>
    </ligand>
</feature>
<feature type="binding site" evidence="1">
    <location>
        <position position="190"/>
    </location>
    <ligand>
        <name>Mg(2+)</name>
        <dbReference type="ChEBI" id="CHEBI:18420"/>
        <label>1</label>
    </ligand>
</feature>
<feature type="binding site" evidence="1">
    <location>
        <position position="190"/>
    </location>
    <ligand>
        <name>Mg(2+)</name>
        <dbReference type="ChEBI" id="CHEBI:18420"/>
        <label>2</label>
    </ligand>
</feature>
<feature type="binding site" evidence="1">
    <location>
        <position position="194"/>
    </location>
    <ligand>
        <name>Mg(2+)</name>
        <dbReference type="ChEBI" id="CHEBI:18420"/>
        <label>1</label>
    </ligand>
</feature>
<feature type="binding site" evidence="1">
    <location>
        <position position="226"/>
    </location>
    <ligand>
        <name>Mg(2+)</name>
        <dbReference type="ChEBI" id="CHEBI:18420"/>
        <label>2</label>
    </ligand>
</feature>
<feature type="binding site" evidence="1">
    <location>
        <position position="230"/>
    </location>
    <ligand>
        <name>Mg(2+)</name>
        <dbReference type="ChEBI" id="CHEBI:18420"/>
        <label>2</label>
    </ligand>
</feature>
<feature type="binding site" evidence="1">
    <location>
        <position position="251"/>
    </location>
    <ligand>
        <name>substrate</name>
    </ligand>
</feature>
<gene>
    <name evidence="1" type="primary">ilvC</name>
    <name type="ordered locus">MmarC6_0233</name>
</gene>